<protein>
    <recommendedName>
        <fullName evidence="1">Large ribosomal subunit protein uL2</fullName>
    </recommendedName>
    <alternativeName>
        <fullName evidence="3">50S ribosomal protein L2</fullName>
    </alternativeName>
</protein>
<organism>
    <name type="scientific">Rhizobium johnstonii (strain DSM 114642 / LMG 32736 / 3841)</name>
    <name type="common">Rhizobium leguminosarum bv. viciae</name>
    <dbReference type="NCBI Taxonomy" id="216596"/>
    <lineage>
        <taxon>Bacteria</taxon>
        <taxon>Pseudomonadati</taxon>
        <taxon>Pseudomonadota</taxon>
        <taxon>Alphaproteobacteria</taxon>
        <taxon>Hyphomicrobiales</taxon>
        <taxon>Rhizobiaceae</taxon>
        <taxon>Rhizobium/Agrobacterium group</taxon>
        <taxon>Rhizobium</taxon>
        <taxon>Rhizobium johnstonii</taxon>
    </lineage>
</organism>
<reference key="1">
    <citation type="journal article" date="2006" name="Genome Biol.">
        <title>The genome of Rhizobium leguminosarum has recognizable core and accessory components.</title>
        <authorList>
            <person name="Young J.P.W."/>
            <person name="Crossman L.C."/>
            <person name="Johnston A.W.B."/>
            <person name="Thomson N.R."/>
            <person name="Ghazoui Z.F."/>
            <person name="Hull K.H."/>
            <person name="Wexler M."/>
            <person name="Curson A.R.J."/>
            <person name="Todd J.D."/>
            <person name="Poole P.S."/>
            <person name="Mauchline T.H."/>
            <person name="East A.K."/>
            <person name="Quail M.A."/>
            <person name="Churcher C."/>
            <person name="Arrowsmith C."/>
            <person name="Cherevach I."/>
            <person name="Chillingworth T."/>
            <person name="Clarke K."/>
            <person name="Cronin A."/>
            <person name="Davis P."/>
            <person name="Fraser A."/>
            <person name="Hance Z."/>
            <person name="Hauser H."/>
            <person name="Jagels K."/>
            <person name="Moule S."/>
            <person name="Mungall K."/>
            <person name="Norbertczak H."/>
            <person name="Rabbinowitsch E."/>
            <person name="Sanders M."/>
            <person name="Simmonds M."/>
            <person name="Whitehead S."/>
            <person name="Parkhill J."/>
        </authorList>
    </citation>
    <scope>NUCLEOTIDE SEQUENCE [LARGE SCALE GENOMIC DNA]</scope>
    <source>
        <strain>DSM 114642 / LMG 32736 / 3841</strain>
    </source>
</reference>
<evidence type="ECO:0000255" key="1">
    <source>
        <dbReference type="HAMAP-Rule" id="MF_01320"/>
    </source>
</evidence>
<evidence type="ECO:0000256" key="2">
    <source>
        <dbReference type="SAM" id="MobiDB-lite"/>
    </source>
</evidence>
<evidence type="ECO:0000305" key="3"/>
<sequence>MALKTFNPITPSQRQLVIVDRSALYKGKPVKALTEGLTKSGGRNNLGRITARFIGGGHKRTYRLIDFKRRKFDVEGTVERIEYDPNRTAFIALVNYADGEKAYILAPQRLAAGDKVIASEKAVDVKPGNTMPLQFIPVGSIIHNVEMKPGKGGQIARSAGGYAQLVGRDQGMAILRLNSGEQRLVHGSCLASIGAVSNPDHANINDGKAGRTVWRGKRPHNRGVVMNPVDHPHGGGEGRTSGGRHPVTPWGKPTKGKRTRSNKSTDKMIMRSRHQRKK</sequence>
<dbReference type="EMBL" id="AM236080">
    <property type="protein sequence ID" value="CAK07272.1"/>
    <property type="molecule type" value="Genomic_DNA"/>
</dbReference>
<dbReference type="RefSeq" id="WP_003547551.1">
    <property type="nucleotide sequence ID" value="NC_008380.1"/>
</dbReference>
<dbReference type="SMR" id="Q1MID8"/>
<dbReference type="EnsemblBacteria" id="CAK07272">
    <property type="protein sequence ID" value="CAK07272"/>
    <property type="gene ID" value="RL1777"/>
</dbReference>
<dbReference type="KEGG" id="rle:RL1777"/>
<dbReference type="eggNOG" id="COG0090">
    <property type="taxonomic scope" value="Bacteria"/>
</dbReference>
<dbReference type="HOGENOM" id="CLU_036235_2_1_5"/>
<dbReference type="Proteomes" id="UP000006575">
    <property type="component" value="Chromosome"/>
</dbReference>
<dbReference type="GO" id="GO:0015934">
    <property type="term" value="C:large ribosomal subunit"/>
    <property type="evidence" value="ECO:0007669"/>
    <property type="project" value="InterPro"/>
</dbReference>
<dbReference type="GO" id="GO:0019843">
    <property type="term" value="F:rRNA binding"/>
    <property type="evidence" value="ECO:0007669"/>
    <property type="project" value="UniProtKB-UniRule"/>
</dbReference>
<dbReference type="GO" id="GO:0003735">
    <property type="term" value="F:structural constituent of ribosome"/>
    <property type="evidence" value="ECO:0007669"/>
    <property type="project" value="InterPro"/>
</dbReference>
<dbReference type="GO" id="GO:0016740">
    <property type="term" value="F:transferase activity"/>
    <property type="evidence" value="ECO:0007669"/>
    <property type="project" value="InterPro"/>
</dbReference>
<dbReference type="GO" id="GO:0002181">
    <property type="term" value="P:cytoplasmic translation"/>
    <property type="evidence" value="ECO:0007669"/>
    <property type="project" value="TreeGrafter"/>
</dbReference>
<dbReference type="FunFam" id="2.30.30.30:FF:000001">
    <property type="entry name" value="50S ribosomal protein L2"/>
    <property type="match status" value="1"/>
</dbReference>
<dbReference type="FunFam" id="2.40.50.140:FF:000003">
    <property type="entry name" value="50S ribosomal protein L2"/>
    <property type="match status" value="1"/>
</dbReference>
<dbReference type="FunFam" id="4.10.950.10:FF:000001">
    <property type="entry name" value="50S ribosomal protein L2"/>
    <property type="match status" value="1"/>
</dbReference>
<dbReference type="Gene3D" id="2.30.30.30">
    <property type="match status" value="1"/>
</dbReference>
<dbReference type="Gene3D" id="2.40.50.140">
    <property type="entry name" value="Nucleic acid-binding proteins"/>
    <property type="match status" value="1"/>
</dbReference>
<dbReference type="Gene3D" id="4.10.950.10">
    <property type="entry name" value="Ribosomal protein L2, domain 3"/>
    <property type="match status" value="1"/>
</dbReference>
<dbReference type="HAMAP" id="MF_01320_B">
    <property type="entry name" value="Ribosomal_uL2_B"/>
    <property type="match status" value="1"/>
</dbReference>
<dbReference type="InterPro" id="IPR012340">
    <property type="entry name" value="NA-bd_OB-fold"/>
</dbReference>
<dbReference type="InterPro" id="IPR014722">
    <property type="entry name" value="Rib_uL2_dom2"/>
</dbReference>
<dbReference type="InterPro" id="IPR002171">
    <property type="entry name" value="Ribosomal_uL2"/>
</dbReference>
<dbReference type="InterPro" id="IPR005880">
    <property type="entry name" value="Ribosomal_uL2_bac/org-type"/>
</dbReference>
<dbReference type="InterPro" id="IPR022669">
    <property type="entry name" value="Ribosomal_uL2_C"/>
</dbReference>
<dbReference type="InterPro" id="IPR022671">
    <property type="entry name" value="Ribosomal_uL2_CS"/>
</dbReference>
<dbReference type="InterPro" id="IPR014726">
    <property type="entry name" value="Ribosomal_uL2_dom3"/>
</dbReference>
<dbReference type="InterPro" id="IPR022666">
    <property type="entry name" value="Ribosomal_uL2_RNA-bd_dom"/>
</dbReference>
<dbReference type="InterPro" id="IPR008991">
    <property type="entry name" value="Translation_prot_SH3-like_sf"/>
</dbReference>
<dbReference type="NCBIfam" id="TIGR01171">
    <property type="entry name" value="rplB_bact"/>
    <property type="match status" value="1"/>
</dbReference>
<dbReference type="PANTHER" id="PTHR13691:SF5">
    <property type="entry name" value="LARGE RIBOSOMAL SUBUNIT PROTEIN UL2M"/>
    <property type="match status" value="1"/>
</dbReference>
<dbReference type="PANTHER" id="PTHR13691">
    <property type="entry name" value="RIBOSOMAL PROTEIN L2"/>
    <property type="match status" value="1"/>
</dbReference>
<dbReference type="Pfam" id="PF00181">
    <property type="entry name" value="Ribosomal_L2"/>
    <property type="match status" value="1"/>
</dbReference>
<dbReference type="Pfam" id="PF03947">
    <property type="entry name" value="Ribosomal_L2_C"/>
    <property type="match status" value="1"/>
</dbReference>
<dbReference type="PIRSF" id="PIRSF002158">
    <property type="entry name" value="Ribosomal_L2"/>
    <property type="match status" value="1"/>
</dbReference>
<dbReference type="SMART" id="SM01383">
    <property type="entry name" value="Ribosomal_L2"/>
    <property type="match status" value="1"/>
</dbReference>
<dbReference type="SMART" id="SM01382">
    <property type="entry name" value="Ribosomal_L2_C"/>
    <property type="match status" value="1"/>
</dbReference>
<dbReference type="SUPFAM" id="SSF50249">
    <property type="entry name" value="Nucleic acid-binding proteins"/>
    <property type="match status" value="1"/>
</dbReference>
<dbReference type="SUPFAM" id="SSF50104">
    <property type="entry name" value="Translation proteins SH3-like domain"/>
    <property type="match status" value="1"/>
</dbReference>
<dbReference type="PROSITE" id="PS00467">
    <property type="entry name" value="RIBOSOMAL_L2"/>
    <property type="match status" value="1"/>
</dbReference>
<feature type="chain" id="PRO_0000309995" description="Large ribosomal subunit protein uL2">
    <location>
        <begin position="1"/>
        <end position="278"/>
    </location>
</feature>
<feature type="region of interest" description="Disordered" evidence="2">
    <location>
        <begin position="202"/>
        <end position="278"/>
    </location>
</feature>
<accession>Q1MID8</accession>
<keyword id="KW-0687">Ribonucleoprotein</keyword>
<keyword id="KW-0689">Ribosomal protein</keyword>
<keyword id="KW-0694">RNA-binding</keyword>
<keyword id="KW-0699">rRNA-binding</keyword>
<comment type="function">
    <text evidence="1">One of the primary rRNA binding proteins. Required for association of the 30S and 50S subunits to form the 70S ribosome, for tRNA binding and peptide bond formation. It has been suggested to have peptidyltransferase activity; this is somewhat controversial. Makes several contacts with the 16S rRNA in the 70S ribosome.</text>
</comment>
<comment type="subunit">
    <text evidence="1">Part of the 50S ribosomal subunit. Forms a bridge to the 30S subunit in the 70S ribosome.</text>
</comment>
<comment type="similarity">
    <text evidence="1">Belongs to the universal ribosomal protein uL2 family.</text>
</comment>
<gene>
    <name evidence="1" type="primary">rplB</name>
    <name type="ordered locus">RL1777</name>
</gene>
<proteinExistence type="inferred from homology"/>
<name>RL2_RHIJ3</name>